<protein>
    <recommendedName>
        <fullName>Putative monooxygenase p33MONOX</fullName>
        <ecNumber>1.-.-.-</ecNumber>
    </recommendedName>
    <alternativeName>
        <fullName>Brain-derived rescue factor p60MONOX</fullName>
    </alternativeName>
    <alternativeName>
        <fullName>Flavin monooxygenase motif-containing protein of 33 kDa</fullName>
    </alternativeName>
</protein>
<feature type="chain" id="PRO_0000307730" description="Putative monooxygenase p33MONOX">
    <location>
        <begin position="1"/>
        <end position="305"/>
    </location>
</feature>
<feature type="region of interest" description="Disordered" evidence="3">
    <location>
        <begin position="37"/>
        <end position="56"/>
    </location>
</feature>
<feature type="region of interest" description="Disordered" evidence="3">
    <location>
        <begin position="158"/>
        <end position="236"/>
    </location>
</feature>
<feature type="region of interest" description="Disordered" evidence="3">
    <location>
        <begin position="259"/>
        <end position="305"/>
    </location>
</feature>
<feature type="short sequence motif" description="Flavin-containing monooxygenase motif">
    <location>
        <begin position="67"/>
        <end position="77"/>
    </location>
</feature>
<feature type="compositionally biased region" description="Low complexity" evidence="3">
    <location>
        <begin position="169"/>
        <end position="183"/>
    </location>
</feature>
<feature type="compositionally biased region" description="Polar residues" evidence="3">
    <location>
        <begin position="193"/>
        <end position="210"/>
    </location>
</feature>
<feature type="modified residue" description="Phosphothreonine" evidence="2">
    <location>
        <position position="44"/>
    </location>
</feature>
<feature type="modified residue" description="Phosphothreonine" evidence="2">
    <location>
        <position position="175"/>
    </location>
</feature>
<feature type="modified residue" description="Phosphoserine" evidence="9">
    <location>
        <position position="182"/>
    </location>
</feature>
<feature type="modified residue" description="Phosphoserine" evidence="9 10">
    <location>
        <position position="183"/>
    </location>
</feature>
<feature type="splice variant" id="VSP_028800" description="In isoform 3." evidence="6">
    <location>
        <begin position="1"/>
        <end position="207"/>
    </location>
</feature>
<feature type="splice variant" id="VSP_028801" description="In isoform 2." evidence="7">
    <location>
        <begin position="1"/>
        <end position="19"/>
    </location>
</feature>
<feature type="sequence conflict" description="In Ref. 2; BAB14957." evidence="8" ref="2">
    <original>K</original>
    <variation>R</variation>
    <location>
        <position position="56"/>
    </location>
</feature>
<feature type="sequence conflict" description="In Ref. 4; CAB99231." evidence="8" ref="4">
    <original>V</original>
    <variation>A</variation>
    <location>
        <position position="97"/>
    </location>
</feature>
<feature type="sequence conflict" description="In Ref. 3; CAG33612." evidence="8" ref="3">
    <original>L</original>
    <variation>P</variation>
    <location>
        <position position="225"/>
    </location>
</feature>
<feature type="sequence conflict" description="In Ref. 4; CAB99231." evidence="8" ref="4">
    <original>P</original>
    <variation>S</variation>
    <location>
        <position position="250"/>
    </location>
</feature>
<reference key="1">
    <citation type="submission" date="2005-05" db="EMBL/GenBank/DDBJ databases">
        <title>Brain-derived rescue factor p60MONOX.</title>
        <authorList>
            <person name="Heese K."/>
        </authorList>
    </citation>
    <scope>NUCLEOTIDE SEQUENCE [MRNA] (ISOFORM 1)</scope>
</reference>
<reference key="2">
    <citation type="journal article" date="2004" name="Nat. Genet.">
        <title>Complete sequencing and characterization of 21,243 full-length human cDNAs.</title>
        <authorList>
            <person name="Ota T."/>
            <person name="Suzuki Y."/>
            <person name="Nishikawa T."/>
            <person name="Otsuki T."/>
            <person name="Sugiyama T."/>
            <person name="Irie R."/>
            <person name="Wakamatsu A."/>
            <person name="Hayashi K."/>
            <person name="Sato H."/>
            <person name="Nagai K."/>
            <person name="Kimura K."/>
            <person name="Makita H."/>
            <person name="Sekine M."/>
            <person name="Obayashi M."/>
            <person name="Nishi T."/>
            <person name="Shibahara T."/>
            <person name="Tanaka T."/>
            <person name="Ishii S."/>
            <person name="Yamamoto J."/>
            <person name="Saito K."/>
            <person name="Kawai Y."/>
            <person name="Isono Y."/>
            <person name="Nakamura Y."/>
            <person name="Nagahari K."/>
            <person name="Murakami K."/>
            <person name="Yasuda T."/>
            <person name="Iwayanagi T."/>
            <person name="Wagatsuma M."/>
            <person name="Shiratori A."/>
            <person name="Sudo H."/>
            <person name="Hosoiri T."/>
            <person name="Kaku Y."/>
            <person name="Kodaira H."/>
            <person name="Kondo H."/>
            <person name="Sugawara M."/>
            <person name="Takahashi M."/>
            <person name="Kanda K."/>
            <person name="Yokoi T."/>
            <person name="Furuya T."/>
            <person name="Kikkawa E."/>
            <person name="Omura Y."/>
            <person name="Abe K."/>
            <person name="Kamihara K."/>
            <person name="Katsuta N."/>
            <person name="Sato K."/>
            <person name="Tanikawa M."/>
            <person name="Yamazaki M."/>
            <person name="Ninomiya K."/>
            <person name="Ishibashi T."/>
            <person name="Yamashita H."/>
            <person name="Murakawa K."/>
            <person name="Fujimori K."/>
            <person name="Tanai H."/>
            <person name="Kimata M."/>
            <person name="Watanabe M."/>
            <person name="Hiraoka S."/>
            <person name="Chiba Y."/>
            <person name="Ishida S."/>
            <person name="Ono Y."/>
            <person name="Takiguchi S."/>
            <person name="Watanabe S."/>
            <person name="Yosida M."/>
            <person name="Hotuta T."/>
            <person name="Kusano J."/>
            <person name="Kanehori K."/>
            <person name="Takahashi-Fujii A."/>
            <person name="Hara H."/>
            <person name="Tanase T.-O."/>
            <person name="Nomura Y."/>
            <person name="Togiya S."/>
            <person name="Komai F."/>
            <person name="Hara R."/>
            <person name="Takeuchi K."/>
            <person name="Arita M."/>
            <person name="Imose N."/>
            <person name="Musashino K."/>
            <person name="Yuuki H."/>
            <person name="Oshima A."/>
            <person name="Sasaki N."/>
            <person name="Aotsuka S."/>
            <person name="Yoshikawa Y."/>
            <person name="Matsunawa H."/>
            <person name="Ichihara T."/>
            <person name="Shiohata N."/>
            <person name="Sano S."/>
            <person name="Moriya S."/>
            <person name="Momiyama H."/>
            <person name="Satoh N."/>
            <person name="Takami S."/>
            <person name="Terashima Y."/>
            <person name="Suzuki O."/>
            <person name="Nakagawa S."/>
            <person name="Senoh A."/>
            <person name="Mizoguchi H."/>
            <person name="Goto Y."/>
            <person name="Shimizu F."/>
            <person name="Wakebe H."/>
            <person name="Hishigaki H."/>
            <person name="Watanabe T."/>
            <person name="Sugiyama A."/>
            <person name="Takemoto M."/>
            <person name="Kawakami B."/>
            <person name="Yamazaki M."/>
            <person name="Watanabe K."/>
            <person name="Kumagai A."/>
            <person name="Itakura S."/>
            <person name="Fukuzumi Y."/>
            <person name="Fujimori Y."/>
            <person name="Komiyama M."/>
            <person name="Tashiro H."/>
            <person name="Tanigami A."/>
            <person name="Fujiwara T."/>
            <person name="Ono T."/>
            <person name="Yamada K."/>
            <person name="Fujii Y."/>
            <person name="Ozaki K."/>
            <person name="Hirao M."/>
            <person name="Ohmori Y."/>
            <person name="Kawabata A."/>
            <person name="Hikiji T."/>
            <person name="Kobatake N."/>
            <person name="Inagaki H."/>
            <person name="Ikema Y."/>
            <person name="Okamoto S."/>
            <person name="Okitani R."/>
            <person name="Kawakami T."/>
            <person name="Noguchi S."/>
            <person name="Itoh T."/>
            <person name="Shigeta K."/>
            <person name="Senba T."/>
            <person name="Matsumura K."/>
            <person name="Nakajima Y."/>
            <person name="Mizuno T."/>
            <person name="Morinaga M."/>
            <person name="Sasaki M."/>
            <person name="Togashi T."/>
            <person name="Oyama M."/>
            <person name="Hata H."/>
            <person name="Watanabe M."/>
            <person name="Komatsu T."/>
            <person name="Mizushima-Sugano J."/>
            <person name="Satoh T."/>
            <person name="Shirai Y."/>
            <person name="Takahashi Y."/>
            <person name="Nakagawa K."/>
            <person name="Okumura K."/>
            <person name="Nagase T."/>
            <person name="Nomura N."/>
            <person name="Kikuchi H."/>
            <person name="Masuho Y."/>
            <person name="Yamashita R."/>
            <person name="Nakai K."/>
            <person name="Yada T."/>
            <person name="Nakamura Y."/>
            <person name="Ohara O."/>
            <person name="Isogai T."/>
            <person name="Sugano S."/>
        </authorList>
    </citation>
    <scope>NUCLEOTIDE SEQUENCE [LARGE SCALE MRNA] (ISOFORM 1)</scope>
    <source>
        <tissue>Brain</tissue>
    </source>
</reference>
<reference key="3">
    <citation type="submission" date="2004-06" db="EMBL/GenBank/DDBJ databases">
        <title>Cloning of human full open reading frames in Gateway(TM) system entry vector (pDONR201).</title>
        <authorList>
            <person name="Ebert L."/>
            <person name="Schick M."/>
            <person name="Neubert P."/>
            <person name="Schatten R."/>
            <person name="Henze S."/>
            <person name="Korn B."/>
        </authorList>
    </citation>
    <scope>NUCLEOTIDE SEQUENCE [LARGE SCALE MRNA] (ISOFORM 1)</scope>
</reference>
<reference key="4">
    <citation type="journal article" date="2007" name="BMC Genomics">
        <title>The full-ORF clone resource of the German cDNA consortium.</title>
        <authorList>
            <person name="Bechtel S."/>
            <person name="Rosenfelder H."/>
            <person name="Duda A."/>
            <person name="Schmidt C.P."/>
            <person name="Ernst U."/>
            <person name="Wellenreuther R."/>
            <person name="Mehrle A."/>
            <person name="Schuster C."/>
            <person name="Bahr A."/>
            <person name="Bloecker H."/>
            <person name="Heubner D."/>
            <person name="Hoerlein A."/>
            <person name="Michel G."/>
            <person name="Wedler H."/>
            <person name="Koehrer K."/>
            <person name="Ottenwaelder B."/>
            <person name="Poustka A."/>
            <person name="Wiemann S."/>
            <person name="Schupp I."/>
        </authorList>
    </citation>
    <scope>NUCLEOTIDE SEQUENCE [LARGE SCALE MRNA] (ISOFORMS 1 AND 2)</scope>
    <source>
        <tissue>Brain</tissue>
        <tissue>Small intestine</tissue>
    </source>
</reference>
<reference key="5">
    <citation type="journal article" date="2004" name="Nature">
        <title>The DNA sequence and comparative analysis of human chromosome 5.</title>
        <authorList>
            <person name="Schmutz J."/>
            <person name="Martin J."/>
            <person name="Terry A."/>
            <person name="Couronne O."/>
            <person name="Grimwood J."/>
            <person name="Lowry S."/>
            <person name="Gordon L.A."/>
            <person name="Scott D."/>
            <person name="Xie G."/>
            <person name="Huang W."/>
            <person name="Hellsten U."/>
            <person name="Tran-Gyamfi M."/>
            <person name="She X."/>
            <person name="Prabhakar S."/>
            <person name="Aerts A."/>
            <person name="Altherr M."/>
            <person name="Bajorek E."/>
            <person name="Black S."/>
            <person name="Branscomb E."/>
            <person name="Caoile C."/>
            <person name="Challacombe J.F."/>
            <person name="Chan Y.M."/>
            <person name="Denys M."/>
            <person name="Detter J.C."/>
            <person name="Escobar J."/>
            <person name="Flowers D."/>
            <person name="Fotopulos D."/>
            <person name="Glavina T."/>
            <person name="Gomez M."/>
            <person name="Gonzales E."/>
            <person name="Goodstein D."/>
            <person name="Grigoriev I."/>
            <person name="Groza M."/>
            <person name="Hammon N."/>
            <person name="Hawkins T."/>
            <person name="Haydu L."/>
            <person name="Israni S."/>
            <person name="Jett J."/>
            <person name="Kadner K."/>
            <person name="Kimball H."/>
            <person name="Kobayashi A."/>
            <person name="Lopez F."/>
            <person name="Lou Y."/>
            <person name="Martinez D."/>
            <person name="Medina C."/>
            <person name="Morgan J."/>
            <person name="Nandkeshwar R."/>
            <person name="Noonan J.P."/>
            <person name="Pitluck S."/>
            <person name="Pollard M."/>
            <person name="Predki P."/>
            <person name="Priest J."/>
            <person name="Ramirez L."/>
            <person name="Retterer J."/>
            <person name="Rodriguez A."/>
            <person name="Rogers S."/>
            <person name="Salamov A."/>
            <person name="Salazar A."/>
            <person name="Thayer N."/>
            <person name="Tice H."/>
            <person name="Tsai M."/>
            <person name="Ustaszewska A."/>
            <person name="Vo N."/>
            <person name="Wheeler J."/>
            <person name="Wu K."/>
            <person name="Yang J."/>
            <person name="Dickson M."/>
            <person name="Cheng J.-F."/>
            <person name="Eichler E.E."/>
            <person name="Olsen A."/>
            <person name="Pennacchio L.A."/>
            <person name="Rokhsar D.S."/>
            <person name="Richardson P."/>
            <person name="Lucas S.M."/>
            <person name="Myers R.M."/>
            <person name="Rubin E.M."/>
        </authorList>
    </citation>
    <scope>NUCLEOTIDE SEQUENCE [LARGE SCALE GENOMIC DNA]</scope>
</reference>
<reference key="6">
    <citation type="submission" date="2005-07" db="EMBL/GenBank/DDBJ databases">
        <authorList>
            <person name="Mural R.J."/>
            <person name="Istrail S."/>
            <person name="Sutton G.G."/>
            <person name="Florea L."/>
            <person name="Halpern A.L."/>
            <person name="Mobarry C.M."/>
            <person name="Lippert R."/>
            <person name="Walenz B."/>
            <person name="Shatkay H."/>
            <person name="Dew I."/>
            <person name="Miller J.R."/>
            <person name="Flanigan M.J."/>
            <person name="Edwards N.J."/>
            <person name="Bolanos R."/>
            <person name="Fasulo D."/>
            <person name="Halldorsson B.V."/>
            <person name="Hannenhalli S."/>
            <person name="Turner R."/>
            <person name="Yooseph S."/>
            <person name="Lu F."/>
            <person name="Nusskern D.R."/>
            <person name="Shue B.C."/>
            <person name="Zheng X.H."/>
            <person name="Zhong F."/>
            <person name="Delcher A.L."/>
            <person name="Huson D.H."/>
            <person name="Kravitz S.A."/>
            <person name="Mouchard L."/>
            <person name="Reinert K."/>
            <person name="Remington K.A."/>
            <person name="Clark A.G."/>
            <person name="Waterman M.S."/>
            <person name="Eichler E.E."/>
            <person name="Adams M.D."/>
            <person name="Hunkapiller M.W."/>
            <person name="Myers E.W."/>
            <person name="Venter J.C."/>
        </authorList>
    </citation>
    <scope>NUCLEOTIDE SEQUENCE [LARGE SCALE GENOMIC DNA]</scope>
</reference>
<reference key="7">
    <citation type="journal article" date="2004" name="Genome Res.">
        <title>The status, quality, and expansion of the NIH full-length cDNA project: the Mammalian Gene Collection (MGC).</title>
        <authorList>
            <consortium name="The MGC Project Team"/>
        </authorList>
    </citation>
    <scope>NUCLEOTIDE SEQUENCE [LARGE SCALE MRNA] (ISOFORMS 1 AND 3)</scope>
    <source>
        <tissue>Brain</tissue>
        <tissue>Muscle</tissue>
        <tissue>Ovary</tissue>
    </source>
</reference>
<reference key="8">
    <citation type="journal article" date="1999" name="DNA Res.">
        <title>Characterization of cDNA clones selected by the GeneMark analysis from size-fractionated cDNA libraries from human brain.</title>
        <authorList>
            <person name="Hirosawa M."/>
            <person name="Nagase T."/>
            <person name="Ishikawa K."/>
            <person name="Kikuno R."/>
            <person name="Nomura N."/>
            <person name="Ohara O."/>
        </authorList>
    </citation>
    <scope>NUCLEOTIDE SEQUENCE [LARGE SCALE MRNA] OF 206-305 (ISOFORM 1)</scope>
    <source>
        <tissue>Brain</tissue>
    </source>
</reference>
<reference key="9">
    <citation type="journal article" date="2006" name="Eur. J. Clin. Invest.">
        <title>Brain site-specific gene expression analysis in Alzheimer's disease patients.</title>
        <authorList>
            <person name="Yokota T."/>
            <person name="Mishra M."/>
            <person name="Akatsu H."/>
            <person name="Tani Y."/>
            <person name="Miyauchi T."/>
            <person name="Yamamoto T."/>
            <person name="Kosaka K."/>
            <person name="Nagai Y."/>
            <person name="Sawada T."/>
            <person name="Heese K."/>
        </authorList>
    </citation>
    <scope>TISSUE SPECIFICITY</scope>
</reference>
<reference key="10">
    <citation type="journal article" date="2009" name="Anal. Chem.">
        <title>Lys-N and trypsin cover complementary parts of the phosphoproteome in a refined SCX-based approach.</title>
        <authorList>
            <person name="Gauci S."/>
            <person name="Helbig A.O."/>
            <person name="Slijper M."/>
            <person name="Krijgsveld J."/>
            <person name="Heck A.J."/>
            <person name="Mohammed S."/>
        </authorList>
    </citation>
    <scope>IDENTIFICATION BY MASS SPECTROMETRY [LARGE SCALE ANALYSIS]</scope>
</reference>
<reference key="11">
    <citation type="journal article" date="2011" name="Mol. Cell. Biochem.">
        <title>Characterizing the novel protein p33MONOX.</title>
        <authorList>
            <person name="Mishra M."/>
            <person name="Inoue N."/>
            <person name="Heese K."/>
        </authorList>
    </citation>
    <scope>INTERACTION WITH NELFB; NOL12 AND PRNP</scope>
</reference>
<reference key="12">
    <citation type="journal article" date="2013" name="J. Proteome Res.">
        <title>Toward a comprehensive characterization of a human cancer cell phosphoproteome.</title>
        <authorList>
            <person name="Zhou H."/>
            <person name="Di Palma S."/>
            <person name="Preisinger C."/>
            <person name="Peng M."/>
            <person name="Polat A.N."/>
            <person name="Heck A.J."/>
            <person name="Mohammed S."/>
        </authorList>
    </citation>
    <scope>PHOSPHORYLATION [LARGE SCALE ANALYSIS] AT SER-182 AND SER-183</scope>
    <scope>IDENTIFICATION BY MASS SPECTROMETRY [LARGE SCALE ANALYSIS]</scope>
    <source>
        <tissue>Cervix carcinoma</tissue>
        <tissue>Erythroleukemia</tissue>
    </source>
</reference>
<reference key="13">
    <citation type="journal article" date="2014" name="J. Proteomics">
        <title>An enzyme assisted RP-RPLC approach for in-depth analysis of human liver phosphoproteome.</title>
        <authorList>
            <person name="Bian Y."/>
            <person name="Song C."/>
            <person name="Cheng K."/>
            <person name="Dong M."/>
            <person name="Wang F."/>
            <person name="Huang J."/>
            <person name="Sun D."/>
            <person name="Wang L."/>
            <person name="Ye M."/>
            <person name="Zou H."/>
        </authorList>
    </citation>
    <scope>PHOSPHORYLATION [LARGE SCALE ANALYSIS] AT SER-183</scope>
    <scope>IDENTIFICATION BY MASS SPECTROMETRY [LARGE SCALE ANALYSIS]</scope>
    <source>
        <tissue>Liver</tissue>
    </source>
</reference>
<dbReference type="EC" id="1.-.-.-"/>
<dbReference type="EMBL" id="DQ073392">
    <property type="protein sequence ID" value="AAY82896.1"/>
    <property type="molecule type" value="mRNA"/>
</dbReference>
<dbReference type="EMBL" id="AK024675">
    <property type="protein sequence ID" value="BAB14957.1"/>
    <property type="molecule type" value="mRNA"/>
</dbReference>
<dbReference type="EMBL" id="AK315428">
    <property type="protein sequence ID" value="BAG37816.1"/>
    <property type="molecule type" value="mRNA"/>
</dbReference>
<dbReference type="EMBL" id="CR457331">
    <property type="protein sequence ID" value="CAG33612.1"/>
    <property type="molecule type" value="mRNA"/>
</dbReference>
<dbReference type="EMBL" id="AL390217">
    <property type="protein sequence ID" value="CAB99231.1"/>
    <property type="molecule type" value="mRNA"/>
</dbReference>
<dbReference type="EMBL" id="BX648859">
    <property type="protein sequence ID" value="CAH56134.1"/>
    <property type="molecule type" value="mRNA"/>
</dbReference>
<dbReference type="EMBL" id="AC138956">
    <property type="status" value="NOT_ANNOTATED_CDS"/>
    <property type="molecule type" value="Genomic_DNA"/>
</dbReference>
<dbReference type="EMBL" id="CH471195">
    <property type="protein sequence ID" value="EAW85087.1"/>
    <property type="molecule type" value="Genomic_DNA"/>
</dbReference>
<dbReference type="EMBL" id="BC006316">
    <property type="protein sequence ID" value="AAH06316.1"/>
    <property type="molecule type" value="mRNA"/>
</dbReference>
<dbReference type="EMBL" id="BC010448">
    <property type="protein sequence ID" value="AAH10448.1"/>
    <property type="molecule type" value="mRNA"/>
</dbReference>
<dbReference type="EMBL" id="BC012848">
    <property type="protein sequence ID" value="AAH12848.1"/>
    <property type="molecule type" value="mRNA"/>
</dbReference>
<dbReference type="EMBL" id="BC017097">
    <property type="protein sequence ID" value="AAH17097.1"/>
    <property type="molecule type" value="mRNA"/>
</dbReference>
<dbReference type="EMBL" id="AB033017">
    <property type="protein sequence ID" value="BAA86505.1"/>
    <property type="molecule type" value="mRNA"/>
</dbReference>
<dbReference type="CCDS" id="CCDS43402.1">
    <molecule id="Q96A73-2"/>
</dbReference>
<dbReference type="CCDS" id="CCDS4399.1">
    <molecule id="Q96A73-1"/>
</dbReference>
<dbReference type="RefSeq" id="NP_001073152.1">
    <molecule id="Q96A73-2"/>
    <property type="nucleotide sequence ID" value="NM_001079684.3"/>
</dbReference>
<dbReference type="RefSeq" id="NP_001073153.1">
    <molecule id="Q96A73-1"/>
    <property type="nucleotide sequence ID" value="NM_001079685.3"/>
</dbReference>
<dbReference type="RefSeq" id="NP_001274264.1">
    <property type="nucleotide sequence ID" value="NM_001287335.1"/>
</dbReference>
<dbReference type="RefSeq" id="NP_001274265.1">
    <molecule id="Q96A73-2"/>
    <property type="nucleotide sequence ID" value="NM_001287336.2"/>
</dbReference>
<dbReference type="RefSeq" id="NP_065177.2">
    <molecule id="Q96A73-1"/>
    <property type="nucleotide sequence ID" value="NM_020444.4"/>
</dbReference>
<dbReference type="RefSeq" id="XP_005265998.1">
    <property type="nucleotide sequence ID" value="XM_005265941.1"/>
</dbReference>
<dbReference type="RefSeq" id="XP_005266003.1">
    <molecule id="Q96A73-2"/>
    <property type="nucleotide sequence ID" value="XM_005265946.5"/>
</dbReference>
<dbReference type="RefSeq" id="XP_054208921.1">
    <molecule id="Q96A73-2"/>
    <property type="nucleotide sequence ID" value="XM_054352946.1"/>
</dbReference>
<dbReference type="SMR" id="Q96A73"/>
<dbReference type="BioGRID" id="121428">
    <property type="interactions" value="51"/>
</dbReference>
<dbReference type="FunCoup" id="Q96A73">
    <property type="interactions" value="194"/>
</dbReference>
<dbReference type="IntAct" id="Q96A73">
    <property type="interactions" value="32"/>
</dbReference>
<dbReference type="MINT" id="Q96A73"/>
<dbReference type="STRING" id="9606.ENSP00000298569"/>
<dbReference type="GlyGen" id="Q96A73">
    <property type="glycosylation" value="3 sites, 1 O-linked glycan (2 sites)"/>
</dbReference>
<dbReference type="iPTMnet" id="Q96A73"/>
<dbReference type="PhosphoSitePlus" id="Q96A73"/>
<dbReference type="BioMuta" id="KIAA1191"/>
<dbReference type="DMDM" id="74731096"/>
<dbReference type="jPOST" id="Q96A73"/>
<dbReference type="MassIVE" id="Q96A73"/>
<dbReference type="PaxDb" id="9606-ENSP00000298569"/>
<dbReference type="PeptideAtlas" id="Q96A73"/>
<dbReference type="ProteomicsDB" id="75930">
    <molecule id="Q96A73-1"/>
</dbReference>
<dbReference type="ProteomicsDB" id="75931">
    <molecule id="Q96A73-2"/>
</dbReference>
<dbReference type="ProteomicsDB" id="75932">
    <molecule id="Q96A73-3"/>
</dbReference>
<dbReference type="Pumba" id="Q96A73"/>
<dbReference type="Antibodypedia" id="45989">
    <property type="antibodies" value="89 antibodies from 20 providers"/>
</dbReference>
<dbReference type="DNASU" id="57179"/>
<dbReference type="Ensembl" id="ENST00000298569.9">
    <molecule id="Q96A73-1"/>
    <property type="protein sequence ID" value="ENSP00000298569.4"/>
    <property type="gene ID" value="ENSG00000122203.15"/>
</dbReference>
<dbReference type="Ensembl" id="ENST00000393725.6">
    <molecule id="Q96A73-2"/>
    <property type="protein sequence ID" value="ENSP00000377326.2"/>
    <property type="gene ID" value="ENSG00000122203.15"/>
</dbReference>
<dbReference type="Ensembl" id="ENST00000510164.5">
    <molecule id="Q96A73-1"/>
    <property type="protein sequence ID" value="ENSP00000421061.1"/>
    <property type="gene ID" value="ENSG00000122203.15"/>
</dbReference>
<dbReference type="Ensembl" id="ENST00000614420.4">
    <molecule id="Q96A73-2"/>
    <property type="protein sequence ID" value="ENSP00000479627.1"/>
    <property type="gene ID" value="ENSG00000122203.15"/>
</dbReference>
<dbReference type="GeneID" id="57179"/>
<dbReference type="KEGG" id="hsa:57179"/>
<dbReference type="MANE-Select" id="ENST00000298569.9">
    <property type="protein sequence ID" value="ENSP00000298569.4"/>
    <property type="RefSeq nucleotide sequence ID" value="NM_020444.5"/>
    <property type="RefSeq protein sequence ID" value="NP_065177.2"/>
</dbReference>
<dbReference type="UCSC" id="uc003mdw.5">
    <molecule id="Q96A73-1"/>
    <property type="organism name" value="human"/>
</dbReference>
<dbReference type="AGR" id="HGNC:29209"/>
<dbReference type="CTD" id="57179"/>
<dbReference type="DisGeNET" id="57179"/>
<dbReference type="GeneCards" id="KIAA1191"/>
<dbReference type="HGNC" id="HGNC:29209">
    <property type="gene designation" value="KIAA1191"/>
</dbReference>
<dbReference type="HPA" id="ENSG00000122203">
    <property type="expression patterns" value="Low tissue specificity"/>
</dbReference>
<dbReference type="neXtProt" id="NX_Q96A73"/>
<dbReference type="OpenTargets" id="ENSG00000122203"/>
<dbReference type="PharmGKB" id="PA143485516"/>
<dbReference type="VEuPathDB" id="HostDB:ENSG00000122203"/>
<dbReference type="eggNOG" id="ENOG502QRB0">
    <property type="taxonomic scope" value="Eukaryota"/>
</dbReference>
<dbReference type="GeneTree" id="ENSGT00390000000537"/>
<dbReference type="HOGENOM" id="CLU_079377_0_0_1"/>
<dbReference type="InParanoid" id="Q96A73"/>
<dbReference type="OMA" id="TIQAYKG"/>
<dbReference type="OrthoDB" id="8935954at2759"/>
<dbReference type="PAN-GO" id="Q96A73">
    <property type="GO annotations" value="1 GO annotation based on evolutionary models"/>
</dbReference>
<dbReference type="PhylomeDB" id="Q96A73"/>
<dbReference type="TreeFam" id="TF332226"/>
<dbReference type="PathwayCommons" id="Q96A73"/>
<dbReference type="SignaLink" id="Q96A73"/>
<dbReference type="BioGRID-ORCS" id="57179">
    <property type="hits" value="17 hits in 1152 CRISPR screens"/>
</dbReference>
<dbReference type="ChiTaRS" id="KIAA1191">
    <property type="organism name" value="human"/>
</dbReference>
<dbReference type="GenomeRNAi" id="57179"/>
<dbReference type="Pharos" id="Q96A73">
    <property type="development level" value="Tdark"/>
</dbReference>
<dbReference type="PRO" id="PR:Q96A73"/>
<dbReference type="Proteomes" id="UP000005640">
    <property type="component" value="Chromosome 5"/>
</dbReference>
<dbReference type="RNAct" id="Q96A73">
    <property type="molecule type" value="protein"/>
</dbReference>
<dbReference type="Bgee" id="ENSG00000122203">
    <property type="expression patterns" value="Expressed in kidney epithelium and 190 other cell types or tissues"/>
</dbReference>
<dbReference type="ExpressionAtlas" id="Q96A73">
    <property type="expression patterns" value="baseline and differential"/>
</dbReference>
<dbReference type="GO" id="GO:0005737">
    <property type="term" value="C:cytoplasm"/>
    <property type="evidence" value="ECO:0000250"/>
    <property type="project" value="UniProtKB"/>
</dbReference>
<dbReference type="GO" id="GO:0005739">
    <property type="term" value="C:mitochondrion"/>
    <property type="evidence" value="ECO:0006056"/>
    <property type="project" value="FlyBase"/>
</dbReference>
<dbReference type="GO" id="GO:0016491">
    <property type="term" value="F:oxidoreductase activity"/>
    <property type="evidence" value="ECO:0007669"/>
    <property type="project" value="UniProtKB-KW"/>
</dbReference>
<dbReference type="InterPro" id="IPR026759">
    <property type="entry name" value="P33MONOX"/>
</dbReference>
<dbReference type="PANTHER" id="PTHR28342">
    <property type="entry name" value="MONOOXYGENASE P33MONOX-RELATED"/>
    <property type="match status" value="1"/>
</dbReference>
<dbReference type="PANTHER" id="PTHR28342:SF1">
    <property type="entry name" value="MONOOXYGENASE P33MONOX-RELATED"/>
    <property type="match status" value="1"/>
</dbReference>
<dbReference type="Pfam" id="PF15302">
    <property type="entry name" value="P33MONOX"/>
    <property type="match status" value="1"/>
</dbReference>
<accession>Q96A73</accession>
<accession>B2RD69</accession>
<accession>B8K1S6</accession>
<accession>Q6IA24</accession>
<accession>Q8NDU3</accession>
<accession>Q9BRE5</accession>
<accession>Q9H7D5</accession>
<accession>Q9ULM9</accession>
<proteinExistence type="evidence at protein level"/>
<organism>
    <name type="scientific">Homo sapiens</name>
    <name type="common">Human</name>
    <dbReference type="NCBI Taxonomy" id="9606"/>
    <lineage>
        <taxon>Eukaryota</taxon>
        <taxon>Metazoa</taxon>
        <taxon>Chordata</taxon>
        <taxon>Craniata</taxon>
        <taxon>Vertebrata</taxon>
        <taxon>Euteleostomi</taxon>
        <taxon>Mammalia</taxon>
        <taxon>Eutheria</taxon>
        <taxon>Euarchontoglires</taxon>
        <taxon>Primates</taxon>
        <taxon>Haplorrhini</taxon>
        <taxon>Catarrhini</taxon>
        <taxon>Hominidae</taxon>
        <taxon>Homo</taxon>
    </lineage>
</organism>
<gene>
    <name type="primary">KIAA1191</name>
    <name type="synonym">P33MONOX</name>
</gene>
<name>P33MX_HUMAN</name>
<sequence length="305" mass="33247">MASRQPEVPALEASAPLGKMSLPIGIYRRAVSYDDTLEDPAPMTPPPSDMGSVPWKPVIPERKYQHLAKVEEGEASLPSPAMTLSSAIDSVDKVPVVKAKATHVIMNSLITKQTQESIQHFERQAGLRDAGYTPHKGLTTEETKYLRVAEALHKLKLQSGEVTKEERQPASAQSTPSTTPHSSPKQRPRGWFTSGSSTALPGPNPSTMDSGSGDKDRNLSDKWSLFGPRSLQKYDSGSFATQAYRGAQKPSPLELIRAQANRMAEDPAALKPPKMDIPVMEGKKQPPRAHNLKPRDLNVLTPTGF</sequence>
<evidence type="ECO:0000250" key="1"/>
<evidence type="ECO:0000250" key="2">
    <source>
        <dbReference type="UniProtKB" id="Q9DBN4"/>
    </source>
</evidence>
<evidence type="ECO:0000256" key="3">
    <source>
        <dbReference type="SAM" id="MobiDB-lite"/>
    </source>
</evidence>
<evidence type="ECO:0000269" key="4">
    <source>
    </source>
</evidence>
<evidence type="ECO:0000269" key="5">
    <source>
    </source>
</evidence>
<evidence type="ECO:0000303" key="6">
    <source>
    </source>
</evidence>
<evidence type="ECO:0000303" key="7">
    <source>
    </source>
</evidence>
<evidence type="ECO:0000305" key="8"/>
<evidence type="ECO:0007744" key="9">
    <source>
    </source>
</evidence>
<evidence type="ECO:0007744" key="10">
    <source>
    </source>
</evidence>
<keyword id="KW-0025">Alternative splicing</keyword>
<keyword id="KW-0963">Cytoplasm</keyword>
<keyword id="KW-0521">NADP</keyword>
<keyword id="KW-0560">Oxidoreductase</keyword>
<keyword id="KW-0597">Phosphoprotein</keyword>
<keyword id="KW-1267">Proteomics identification</keyword>
<keyword id="KW-1185">Reference proteome</keyword>
<comment type="function">
    <text>Potential NADPH-dependent oxidoreductase. May be involved in the regulation of neuronal survival, differentiation and axonal outgrowth.</text>
</comment>
<comment type="subunit">
    <text evidence="5">Interacts with NELFB, NOL12 and PRNP.</text>
</comment>
<comment type="interaction">
    <interactant intactId="EBI-725897">
        <id>Q96A73</id>
    </interactant>
    <interactant intactId="EBI-752420">
        <id>Q9NUX5</id>
        <label>POT1</label>
    </interactant>
    <organismsDiffer>false</organismsDiffer>
    <experiments>2</experiments>
</comment>
<comment type="subcellular location">
    <subcellularLocation>
        <location evidence="1">Cytoplasm</location>
    </subcellularLocation>
</comment>
<comment type="alternative products">
    <event type="alternative splicing"/>
    <isoform>
        <id>Q96A73-1</id>
        <name>1</name>
        <sequence type="displayed"/>
    </isoform>
    <isoform>
        <id>Q96A73-2</id>
        <name>2</name>
        <sequence type="described" ref="VSP_028801"/>
    </isoform>
    <isoform>
        <id>Q96A73-3</id>
        <name>3</name>
        <sequence type="described" ref="VSP_028800"/>
    </isoform>
</comment>
<comment type="tissue specificity">
    <text evidence="4">Down-regulated in the occipital lobe of an early stage Alzheimer disease patients.</text>
</comment>
<comment type="similarity">
    <text evidence="8">Belongs to the P33MONOX family.</text>
</comment>